<accession>P50510</accession>
<evidence type="ECO:0000255" key="1">
    <source>
        <dbReference type="HAMAP-Rule" id="MF_00961"/>
    </source>
</evidence>
<name>RPOH_SERMA</name>
<sequence>MTKEMQTLALVPQGSLEAYIRAANAYPMLTAEEERELAERLHYQGDLDAAKQLILSHLRFVAHIARNYSGYGLPQADLIQEGNIGLMKAVRRFNPEVGVRLVSFAVHWIKAEIHEYVLRNWRIVKVATTKAQRKLFFNLRKTKQRLGWFNQDEVELVARELGVTSKDVREMESRMAAQDMTFDPTPDDEARDGQSMAPVLYLQDKSSDFAEGIEEDNWESNAADKLAYALEGLDERSQHIIRARWLDDDNKSTLQELADQYGVSAERVRQLEKNAMKKLKMAIEA</sequence>
<comment type="function">
    <text evidence="1">Sigma factors are initiation factors that promote the attachment of RNA polymerase to specific initiation sites and are then released. This sigma factor is involved in regulation of expression of heat shock genes.</text>
</comment>
<comment type="subunit">
    <text evidence="1">Interacts with the RNA polymerase core enzyme.</text>
</comment>
<comment type="subcellular location">
    <subcellularLocation>
        <location evidence="1">Cytoplasm</location>
    </subcellularLocation>
</comment>
<comment type="similarity">
    <text evidence="1">Belongs to the sigma-70 factor family. RpoH subfamily.</text>
</comment>
<proteinExistence type="inferred from homology"/>
<dbReference type="EMBL" id="D50831">
    <property type="protein sequence ID" value="BAA09442.1"/>
    <property type="molecule type" value="Genomic_DNA"/>
</dbReference>
<dbReference type="PIR" id="S60167">
    <property type="entry name" value="S60167"/>
</dbReference>
<dbReference type="RefSeq" id="WP_004934345.1">
    <property type="nucleotide sequence ID" value="NZ_WVHX01000029.1"/>
</dbReference>
<dbReference type="SMR" id="P50510"/>
<dbReference type="STRING" id="273526.SMDB11_4321"/>
<dbReference type="GeneID" id="93694763"/>
<dbReference type="OrthoDB" id="9809557at2"/>
<dbReference type="GO" id="GO:0005737">
    <property type="term" value="C:cytoplasm"/>
    <property type="evidence" value="ECO:0007669"/>
    <property type="project" value="UniProtKB-SubCell"/>
</dbReference>
<dbReference type="GO" id="GO:0003677">
    <property type="term" value="F:DNA binding"/>
    <property type="evidence" value="ECO:0007669"/>
    <property type="project" value="UniProtKB-UniRule"/>
</dbReference>
<dbReference type="GO" id="GO:0016987">
    <property type="term" value="F:sigma factor activity"/>
    <property type="evidence" value="ECO:0007669"/>
    <property type="project" value="UniProtKB-UniRule"/>
</dbReference>
<dbReference type="GO" id="GO:0006352">
    <property type="term" value="P:DNA-templated transcription initiation"/>
    <property type="evidence" value="ECO:0007669"/>
    <property type="project" value="UniProtKB-UniRule"/>
</dbReference>
<dbReference type="GO" id="GO:0009408">
    <property type="term" value="P:response to heat"/>
    <property type="evidence" value="ECO:0007669"/>
    <property type="project" value="UniProtKB-UniRule"/>
</dbReference>
<dbReference type="CDD" id="cd06171">
    <property type="entry name" value="Sigma70_r4"/>
    <property type="match status" value="1"/>
</dbReference>
<dbReference type="FunFam" id="1.10.10.10:FF:000285">
    <property type="entry name" value="RNA polymerase sigma factor RpoH"/>
    <property type="match status" value="1"/>
</dbReference>
<dbReference type="FunFam" id="1.20.120.1810:FF:000001">
    <property type="entry name" value="RNA polymerase sigma factor RpoH"/>
    <property type="match status" value="1"/>
</dbReference>
<dbReference type="FunFam" id="1.20.140.160:FF:000002">
    <property type="entry name" value="RNA polymerase sigma factor RpoH"/>
    <property type="match status" value="1"/>
</dbReference>
<dbReference type="Gene3D" id="1.20.120.1810">
    <property type="match status" value="1"/>
</dbReference>
<dbReference type="Gene3D" id="1.10.10.10">
    <property type="entry name" value="Winged helix-like DNA-binding domain superfamily/Winged helix DNA-binding domain"/>
    <property type="match status" value="1"/>
</dbReference>
<dbReference type="HAMAP" id="MF_00961">
    <property type="entry name" value="Sigma70_RpoH"/>
    <property type="match status" value="1"/>
</dbReference>
<dbReference type="InterPro" id="IPR014284">
    <property type="entry name" value="RNA_pol_sigma-70_dom"/>
</dbReference>
<dbReference type="InterPro" id="IPR000943">
    <property type="entry name" value="RNA_pol_sigma70"/>
</dbReference>
<dbReference type="InterPro" id="IPR009042">
    <property type="entry name" value="RNA_pol_sigma70_r1_2"/>
</dbReference>
<dbReference type="InterPro" id="IPR007627">
    <property type="entry name" value="RNA_pol_sigma70_r2"/>
</dbReference>
<dbReference type="InterPro" id="IPR007630">
    <property type="entry name" value="RNA_pol_sigma70_r4"/>
</dbReference>
<dbReference type="InterPro" id="IPR013325">
    <property type="entry name" value="RNA_pol_sigma_r2"/>
</dbReference>
<dbReference type="InterPro" id="IPR013324">
    <property type="entry name" value="RNA_pol_sigma_r3/r4-like"/>
</dbReference>
<dbReference type="InterPro" id="IPR012759">
    <property type="entry name" value="RNA_pol_sigma_RpoH_proteobac"/>
</dbReference>
<dbReference type="InterPro" id="IPR050813">
    <property type="entry name" value="Sigma-70_Factor"/>
</dbReference>
<dbReference type="InterPro" id="IPR036388">
    <property type="entry name" value="WH-like_DNA-bd_sf"/>
</dbReference>
<dbReference type="NCBIfam" id="NF005143">
    <property type="entry name" value="PRK06596.1"/>
    <property type="match status" value="1"/>
</dbReference>
<dbReference type="NCBIfam" id="TIGR02392">
    <property type="entry name" value="rpoH_proteo"/>
    <property type="match status" value="1"/>
</dbReference>
<dbReference type="NCBIfam" id="TIGR02937">
    <property type="entry name" value="sigma70-ECF"/>
    <property type="match status" value="1"/>
</dbReference>
<dbReference type="PANTHER" id="PTHR30376:SF3">
    <property type="entry name" value="RNA POLYMERASE SIGMA FACTOR RPOH"/>
    <property type="match status" value="1"/>
</dbReference>
<dbReference type="PANTHER" id="PTHR30376">
    <property type="entry name" value="SIGMA FACTOR RPOH HEAT SHOCK RELATED"/>
    <property type="match status" value="1"/>
</dbReference>
<dbReference type="Pfam" id="PF00140">
    <property type="entry name" value="Sigma70_r1_2"/>
    <property type="match status" value="1"/>
</dbReference>
<dbReference type="Pfam" id="PF04542">
    <property type="entry name" value="Sigma70_r2"/>
    <property type="match status" value="1"/>
</dbReference>
<dbReference type="Pfam" id="PF04545">
    <property type="entry name" value="Sigma70_r4"/>
    <property type="match status" value="1"/>
</dbReference>
<dbReference type="PIRSF" id="PIRSF000770">
    <property type="entry name" value="RNA_pol_sigma-SigE/K"/>
    <property type="match status" value="1"/>
</dbReference>
<dbReference type="PRINTS" id="PR00046">
    <property type="entry name" value="SIGMA70FCT"/>
</dbReference>
<dbReference type="SUPFAM" id="SSF88946">
    <property type="entry name" value="Sigma2 domain of RNA polymerase sigma factors"/>
    <property type="match status" value="1"/>
</dbReference>
<dbReference type="SUPFAM" id="SSF88659">
    <property type="entry name" value="Sigma3 and sigma4 domains of RNA polymerase sigma factors"/>
    <property type="match status" value="1"/>
</dbReference>
<dbReference type="PROSITE" id="PS00715">
    <property type="entry name" value="SIGMA70_1"/>
    <property type="match status" value="1"/>
</dbReference>
<dbReference type="PROSITE" id="PS00716">
    <property type="entry name" value="SIGMA70_2"/>
    <property type="match status" value="1"/>
</dbReference>
<feature type="chain" id="PRO_0000093963" description="RNA polymerase sigma factor RpoH">
    <location>
        <begin position="1"/>
        <end position="285"/>
    </location>
</feature>
<feature type="DNA-binding region" description="H-T-H motif" evidence="1">
    <location>
        <begin position="254"/>
        <end position="273"/>
    </location>
</feature>
<feature type="region of interest" description="Sigma-70 factor domain-2" evidence="1">
    <location>
        <begin position="53"/>
        <end position="122"/>
    </location>
</feature>
<feature type="region of interest" description="Sigma-70 factor domain-4" evidence="1">
    <location>
        <begin position="229"/>
        <end position="281"/>
    </location>
</feature>
<feature type="short sequence motif" description="Interaction with polymerase core subunit RpoC">
    <location>
        <begin position="77"/>
        <end position="80"/>
    </location>
</feature>
<keyword id="KW-0963">Cytoplasm</keyword>
<keyword id="KW-0238">DNA-binding</keyword>
<keyword id="KW-0731">Sigma factor</keyword>
<keyword id="KW-0346">Stress response</keyword>
<keyword id="KW-0804">Transcription</keyword>
<keyword id="KW-0805">Transcription regulation</keyword>
<gene>
    <name evidence="1" type="primary">rpoH</name>
</gene>
<protein>
    <recommendedName>
        <fullName evidence="1">RNA polymerase sigma factor RpoH</fullName>
    </recommendedName>
    <alternativeName>
        <fullName evidence="1">RNA polymerase sigma-32 factor</fullName>
    </alternativeName>
</protein>
<reference key="1">
    <citation type="journal article" date="1995" name="Nucleic Acids Res.">
        <title>Isolation and sequence analysis of rpoH genes encoding sigma 32 homologs from Gram-negative bacteria: conserved mRNA and protein segments for heat shock regulation.</title>
        <authorList>
            <person name="Nakahigashi K."/>
            <person name="Yanagi H."/>
            <person name="Yura T."/>
        </authorList>
    </citation>
    <scope>NUCLEOTIDE SEQUENCE [GENOMIC DNA]</scope>
    <source>
        <strain>ATCC 264 / 1404</strain>
    </source>
</reference>
<organism>
    <name type="scientific">Serratia marcescens</name>
    <dbReference type="NCBI Taxonomy" id="615"/>
    <lineage>
        <taxon>Bacteria</taxon>
        <taxon>Pseudomonadati</taxon>
        <taxon>Pseudomonadota</taxon>
        <taxon>Gammaproteobacteria</taxon>
        <taxon>Enterobacterales</taxon>
        <taxon>Yersiniaceae</taxon>
        <taxon>Serratia</taxon>
    </lineage>
</organism>